<accession>Q9VC70</accession>
<gene>
    <name evidence="6 9" type="primary">DZIP1</name>
    <name evidence="9" type="ORF">CG13617</name>
</gene>
<sequence>MGFKGKYPQMVRETGFKLRQYRDGPLDWRLMGSYETERILREQNFELVDKALTHLSEAPLGTVLETHILDSGIAKYFVMSQYAIQYLMCCRTYLDECVTDLKEAHTTAQEEIATLRKSLSESNNEVVQLHKRITQIEAIREVVYPCHLCTKNFISNEALNVHIGRKHRVASPPSLTSATGKEKDRDKATDVHLINTIKMELEIKQLKERLNAAERNIKERSTGSKRVSPRQEQRHVGIQSNLAEPKEKDEDSGEARQSEASERKEQLTGLAERLSNFEEWQTQLKQSNEQFIQDINKRLEGLSHALEQSKQASASTPPLEDRVATPCLEDLERILTEKVAEIGKVSAHRLEEVVYHLEEGYKEKLGALERELKQLSVQKVQPEPVQTVPVASKIPKPVVRKEETNIDRIRKQVESEFLKQKHDDDTYSIEEAPRKGSEKPFPQLVTQVQVVEKEQPSAGSSDSNPTYTKSPREPAPNKQETKEATDVSDSLSQEETENEEERSLTEEEGTDVPTSGSEAAREDPTPKTIKPSGRIIKSPQKPLTRKDARKMVNRKLMSHGFDMKSKGISHNSLKRVNSELTEHRNKLKLQHPHFYATRNRIRKFVEKLCSAKFSERAEMLLKHKSPLKPMEVPGKGIPRSAISEKSEEDIASSQGEEQTDEQTDSSEQQTRSPSPQRLVSRDFKARLEEILVKPAATIRGASKSSLSSRPVPLPRKRVMFNTTEDGKSFNDSDDNLK</sequence>
<protein>
    <recommendedName>
        <fullName evidence="8">Cilium assembly protein DZIP1L</fullName>
    </recommendedName>
    <alternativeName>
        <fullName>DAZ-interacting zinc finger protein 1-like</fullName>
    </alternativeName>
    <alternativeName>
        <fullName evidence="6">Zinc finger protein DZIP1</fullName>
    </alternativeName>
</protein>
<feature type="chain" id="PRO_0000452641" description="Cilium assembly protein DZIP1L">
    <location>
        <begin position="1"/>
        <end position="737"/>
    </location>
</feature>
<feature type="zinc finger region" description="C2H2-type" evidence="2">
    <location>
        <begin position="144"/>
        <end position="167"/>
    </location>
</feature>
<feature type="region of interest" description="Interaction with Rab8" evidence="5">
    <location>
        <begin position="1"/>
        <end position="293"/>
    </location>
</feature>
<feature type="region of interest" description="Disordered" evidence="3">
    <location>
        <begin position="167"/>
        <end position="187"/>
    </location>
</feature>
<feature type="region of interest" description="Disordered" evidence="3">
    <location>
        <begin position="214"/>
        <end position="267"/>
    </location>
</feature>
<feature type="region of interest" description="Disordered" evidence="3">
    <location>
        <begin position="415"/>
        <end position="548"/>
    </location>
</feature>
<feature type="region of interest" description="Disordered" evidence="3">
    <location>
        <begin position="624"/>
        <end position="682"/>
    </location>
</feature>
<feature type="region of interest" description="Disordered" evidence="3">
    <location>
        <begin position="698"/>
        <end position="737"/>
    </location>
</feature>
<feature type="coiled-coil region" evidence="1">
    <location>
        <begin position="98"/>
        <end position="132"/>
    </location>
</feature>
<feature type="compositionally biased region" description="Basic and acidic residues" evidence="3">
    <location>
        <begin position="244"/>
        <end position="266"/>
    </location>
</feature>
<feature type="compositionally biased region" description="Basic and acidic residues" evidence="3">
    <location>
        <begin position="415"/>
        <end position="438"/>
    </location>
</feature>
<feature type="compositionally biased region" description="Polar residues" evidence="3">
    <location>
        <begin position="457"/>
        <end position="469"/>
    </location>
</feature>
<feature type="compositionally biased region" description="Acidic residues" evidence="3">
    <location>
        <begin position="492"/>
        <end position="510"/>
    </location>
</feature>
<feature type="compositionally biased region" description="Polar residues" evidence="3">
    <location>
        <begin position="665"/>
        <end position="677"/>
    </location>
</feature>
<feature type="compositionally biased region" description="Basic and acidic residues" evidence="3">
    <location>
        <begin position="724"/>
        <end position="737"/>
    </location>
</feature>
<feature type="mutagenesis site" description="Viable but displays adherent transition zone (TZ) assembly in sensory neurons and spermatocytes. Consequently, adults display defects associated with ciliary dysfunction and disorganization, such as severe uncoordination and axonemal defects and dispersed nuclei in the testes. Cilia are essentially absent in antennal chordotonal organs, transition zones are disorganized and microtubules fail to elongate." evidence="4">
    <location>
        <begin position="1"/>
        <end position="65"/>
    </location>
</feature>
<feature type="mutagenesis site" description="Adults display adherent transition zone (TZ) assembly and cilia are almost completely lost in auditory neurons. Consequently, adults display defects associated with ciliary dysfunction and disorganization, such as uncoordination, inability to stand, and severely deficient in touch and hearing. In spermatocytes, ciliary axonemes extend aberrantly and the basal body and plasma membrane separate at later stages of spermatogenesis." evidence="5">
    <location>
        <begin position="357"/>
        <end position="737"/>
    </location>
</feature>
<proteinExistence type="evidence at protein level"/>
<evidence type="ECO:0000255" key="1"/>
<evidence type="ECO:0000255" key="2">
    <source>
        <dbReference type="PROSITE-ProRule" id="PRU00042"/>
    </source>
</evidence>
<evidence type="ECO:0000256" key="3">
    <source>
        <dbReference type="SAM" id="MobiDB-lite"/>
    </source>
</evidence>
<evidence type="ECO:0000269" key="4">
    <source>
    </source>
</evidence>
<evidence type="ECO:0000269" key="5">
    <source>
    </source>
</evidence>
<evidence type="ECO:0000303" key="6">
    <source>
    </source>
</evidence>
<evidence type="ECO:0000305" key="7"/>
<evidence type="ECO:0000305" key="8">
    <source>
    </source>
</evidence>
<evidence type="ECO:0000312" key="9">
    <source>
        <dbReference type="FlyBase" id="FBgn0039201"/>
    </source>
</evidence>
<evidence type="ECO:0000312" key="10">
    <source>
        <dbReference type="Proteomes" id="UP000000803"/>
    </source>
</evidence>
<keyword id="KW-0966">Cell projection</keyword>
<keyword id="KW-0970">Cilium biogenesis/degradation</keyword>
<keyword id="KW-0175">Coiled coil</keyword>
<keyword id="KW-0963">Cytoplasm</keyword>
<keyword id="KW-0206">Cytoskeleton</keyword>
<keyword id="KW-0479">Metal-binding</keyword>
<keyword id="KW-1185">Reference proteome</keyword>
<keyword id="KW-0862">Zinc</keyword>
<keyword id="KW-0863">Zinc-finger</keyword>
<comment type="function">
    <text evidence="4 5">Component of the DZIP1-Fam92-Cby complex which promotes ciliogenesis in sensory neurons and spermatocytes by acting downstream of Cep290 to initiate early ciliary membrane formation and thus transition zone (TZ) assembly (PubMed:31821146, PubMed:33370260). During spermatogenesis, also regulates distal elongation of the basal-body and their docking (anchoring) to the plasma membrane and as a consequence, regulates the initiation and proper elongation of axonemal microtubules (PubMed:31821146). Within the complex, required to recruit or stabilize Rab8, Fam92 and Cby at the distal basal body of cilia to promote early ciliary membrane formation and initiate TZ assembly (PubMed:31821146). Also acts with Fam92 to restrict Cep290 localization to the proximal part of the TZ (PubMed:31821146). May also be involved in recruitment or stabilization of Mks1 at the TZ (PubMed:31821146).</text>
</comment>
<comment type="subunit">
    <text evidence="4 5">Component of a ciliary transition zone (TZ)-localized complex composed of DZIP1, Fam92 and Cby (PubMed:31821146). Interacts directly with Cby (PubMed:31821146, PubMed:33370260). Interacts with Cep290 (via N-terminus) (PubMed:33370260). Interacts (via N-terminus) with Rab8 (PubMed:33370260).</text>
</comment>
<comment type="interaction">
    <interactant intactId="EBI-134631">
        <id>Q9VC70</id>
    </interactant>
    <interactant intactId="EBI-38257617">
        <id>B9A0M5</id>
        <label>Cby</label>
    </interactant>
    <organismsDiffer>false</organismsDiffer>
    <experiments>3</experiments>
</comment>
<comment type="interaction">
    <interactant intactId="EBI-134631">
        <id>Q9VC70</id>
    </interactant>
    <interactant intactId="EBI-92679">
        <id>Q9W0M1</id>
        <label>Cep290</label>
    </interactant>
    <organismsDiffer>false</organismsDiffer>
    <experiments>3</experiments>
</comment>
<comment type="interaction">
    <interactant intactId="EBI-134631">
        <id>Q9VC70</id>
    </interactant>
    <interactant intactId="EBI-123963">
        <id>O18338</id>
        <label>Rab8</label>
    </interactant>
    <organismsDiffer>false</organismsDiffer>
    <experiments>3</experiments>
</comment>
<comment type="subcellular location">
    <subcellularLocation>
        <location evidence="4 5">Cytoplasm</location>
        <location evidence="4 5">Cytoskeleton</location>
        <location evidence="4 5">Microtubule organizing center</location>
        <location evidence="4 5">Centrosome</location>
        <location evidence="4 5">Centriole</location>
    </subcellularLocation>
    <subcellularLocation>
        <location evidence="4 5">Cytoplasm</location>
        <location evidence="4 5">Cytoskeleton</location>
        <location evidence="4 5">Cilium basal body</location>
    </subcellularLocation>
    <text evidence="4 5">Localizes at the transition zone (TZ) in type I sensory neurons and spermatocytes (PubMed:31821146, PubMed:33370260). In spermatocytes, localizes along the TZ membranes (PubMed:33370260). Localizes at the centriolar distal ends of early spermatocytes and in elongating spermatids, when the TZ migrates away from the basal body, localizes at the ring centriole (PubMed:31821146, PubMed:33370260). In sensory neurons, localizes between the transition fiber and TZ core components (PubMed:33370260).</text>
</comment>
<comment type="tissue specificity">
    <text evidence="4">In neurons of the second and third antennal segments, expressed at the tip of the dendrites.</text>
</comment>
<comment type="similarity">
    <text evidence="7">Belongs to the DZIP C2H2-type zinc-finger protein family.</text>
</comment>
<name>DZIP1_DROME</name>
<reference evidence="10" key="1">
    <citation type="journal article" date="2000" name="Science">
        <title>The genome sequence of Drosophila melanogaster.</title>
        <authorList>
            <person name="Adams M.D."/>
            <person name="Celniker S.E."/>
            <person name="Holt R.A."/>
            <person name="Evans C.A."/>
            <person name="Gocayne J.D."/>
            <person name="Amanatides P.G."/>
            <person name="Scherer S.E."/>
            <person name="Li P.W."/>
            <person name="Hoskins R.A."/>
            <person name="Galle R.F."/>
            <person name="George R.A."/>
            <person name="Lewis S.E."/>
            <person name="Richards S."/>
            <person name="Ashburner M."/>
            <person name="Henderson S.N."/>
            <person name="Sutton G.G."/>
            <person name="Wortman J.R."/>
            <person name="Yandell M.D."/>
            <person name="Zhang Q."/>
            <person name="Chen L.X."/>
            <person name="Brandon R.C."/>
            <person name="Rogers Y.-H.C."/>
            <person name="Blazej R.G."/>
            <person name="Champe M."/>
            <person name="Pfeiffer B.D."/>
            <person name="Wan K.H."/>
            <person name="Doyle C."/>
            <person name="Baxter E.G."/>
            <person name="Helt G."/>
            <person name="Nelson C.R."/>
            <person name="Miklos G.L.G."/>
            <person name="Abril J.F."/>
            <person name="Agbayani A."/>
            <person name="An H.-J."/>
            <person name="Andrews-Pfannkoch C."/>
            <person name="Baldwin D."/>
            <person name="Ballew R.M."/>
            <person name="Basu A."/>
            <person name="Baxendale J."/>
            <person name="Bayraktaroglu L."/>
            <person name="Beasley E.M."/>
            <person name="Beeson K.Y."/>
            <person name="Benos P.V."/>
            <person name="Berman B.P."/>
            <person name="Bhandari D."/>
            <person name="Bolshakov S."/>
            <person name="Borkova D."/>
            <person name="Botchan M.R."/>
            <person name="Bouck J."/>
            <person name="Brokstein P."/>
            <person name="Brottier P."/>
            <person name="Burtis K.C."/>
            <person name="Busam D.A."/>
            <person name="Butler H."/>
            <person name="Cadieu E."/>
            <person name="Center A."/>
            <person name="Chandra I."/>
            <person name="Cherry J.M."/>
            <person name="Cawley S."/>
            <person name="Dahlke C."/>
            <person name="Davenport L.B."/>
            <person name="Davies P."/>
            <person name="de Pablos B."/>
            <person name="Delcher A."/>
            <person name="Deng Z."/>
            <person name="Mays A.D."/>
            <person name="Dew I."/>
            <person name="Dietz S.M."/>
            <person name="Dodson K."/>
            <person name="Doup L.E."/>
            <person name="Downes M."/>
            <person name="Dugan-Rocha S."/>
            <person name="Dunkov B.C."/>
            <person name="Dunn P."/>
            <person name="Durbin K.J."/>
            <person name="Evangelista C.C."/>
            <person name="Ferraz C."/>
            <person name="Ferriera S."/>
            <person name="Fleischmann W."/>
            <person name="Fosler C."/>
            <person name="Gabrielian A.E."/>
            <person name="Garg N.S."/>
            <person name="Gelbart W.M."/>
            <person name="Glasser K."/>
            <person name="Glodek A."/>
            <person name="Gong F."/>
            <person name="Gorrell J.H."/>
            <person name="Gu Z."/>
            <person name="Guan P."/>
            <person name="Harris M."/>
            <person name="Harris N.L."/>
            <person name="Harvey D.A."/>
            <person name="Heiman T.J."/>
            <person name="Hernandez J.R."/>
            <person name="Houck J."/>
            <person name="Hostin D."/>
            <person name="Houston K.A."/>
            <person name="Howland T.J."/>
            <person name="Wei M.-H."/>
            <person name="Ibegwam C."/>
            <person name="Jalali M."/>
            <person name="Kalush F."/>
            <person name="Karpen G.H."/>
            <person name="Ke Z."/>
            <person name="Kennison J.A."/>
            <person name="Ketchum K.A."/>
            <person name="Kimmel B.E."/>
            <person name="Kodira C.D."/>
            <person name="Kraft C.L."/>
            <person name="Kravitz S."/>
            <person name="Kulp D."/>
            <person name="Lai Z."/>
            <person name="Lasko P."/>
            <person name="Lei Y."/>
            <person name="Levitsky A.A."/>
            <person name="Li J.H."/>
            <person name="Li Z."/>
            <person name="Liang Y."/>
            <person name="Lin X."/>
            <person name="Liu X."/>
            <person name="Mattei B."/>
            <person name="McIntosh T.C."/>
            <person name="McLeod M.P."/>
            <person name="McPherson D."/>
            <person name="Merkulov G."/>
            <person name="Milshina N.V."/>
            <person name="Mobarry C."/>
            <person name="Morris J."/>
            <person name="Moshrefi A."/>
            <person name="Mount S.M."/>
            <person name="Moy M."/>
            <person name="Murphy B."/>
            <person name="Murphy L."/>
            <person name="Muzny D.M."/>
            <person name="Nelson D.L."/>
            <person name="Nelson D.R."/>
            <person name="Nelson K.A."/>
            <person name="Nixon K."/>
            <person name="Nusskern D.R."/>
            <person name="Pacleb J.M."/>
            <person name="Palazzolo M."/>
            <person name="Pittman G.S."/>
            <person name="Pan S."/>
            <person name="Pollard J."/>
            <person name="Puri V."/>
            <person name="Reese M.G."/>
            <person name="Reinert K."/>
            <person name="Remington K."/>
            <person name="Saunders R.D.C."/>
            <person name="Scheeler F."/>
            <person name="Shen H."/>
            <person name="Shue B.C."/>
            <person name="Siden-Kiamos I."/>
            <person name="Simpson M."/>
            <person name="Skupski M.P."/>
            <person name="Smith T.J."/>
            <person name="Spier E."/>
            <person name="Spradling A.C."/>
            <person name="Stapleton M."/>
            <person name="Strong R."/>
            <person name="Sun E."/>
            <person name="Svirskas R."/>
            <person name="Tector C."/>
            <person name="Turner R."/>
            <person name="Venter E."/>
            <person name="Wang A.H."/>
            <person name="Wang X."/>
            <person name="Wang Z.-Y."/>
            <person name="Wassarman D.A."/>
            <person name="Weinstock G.M."/>
            <person name="Weissenbach J."/>
            <person name="Williams S.M."/>
            <person name="Woodage T."/>
            <person name="Worley K.C."/>
            <person name="Wu D."/>
            <person name="Yang S."/>
            <person name="Yao Q.A."/>
            <person name="Ye J."/>
            <person name="Yeh R.-F."/>
            <person name="Zaveri J.S."/>
            <person name="Zhan M."/>
            <person name="Zhang G."/>
            <person name="Zhao Q."/>
            <person name="Zheng L."/>
            <person name="Zheng X.H."/>
            <person name="Zhong F.N."/>
            <person name="Zhong W."/>
            <person name="Zhou X."/>
            <person name="Zhu S.C."/>
            <person name="Zhu X."/>
            <person name="Smith H.O."/>
            <person name="Gibbs R.A."/>
            <person name="Myers E.W."/>
            <person name="Rubin G.M."/>
            <person name="Venter J.C."/>
        </authorList>
    </citation>
    <scope>NUCLEOTIDE SEQUENCE [LARGE SCALE GENOMIC DNA]</scope>
    <source>
        <strain evidence="10">Berkeley</strain>
    </source>
</reference>
<reference evidence="10" key="2">
    <citation type="journal article" date="2002" name="Genome Biol.">
        <title>Annotation of the Drosophila melanogaster euchromatic genome: a systematic review.</title>
        <authorList>
            <person name="Misra S."/>
            <person name="Crosby M.A."/>
            <person name="Mungall C.J."/>
            <person name="Matthews B.B."/>
            <person name="Campbell K.S."/>
            <person name="Hradecky P."/>
            <person name="Huang Y."/>
            <person name="Kaminker J.S."/>
            <person name="Millburn G.H."/>
            <person name="Prochnik S.E."/>
            <person name="Smith C.D."/>
            <person name="Tupy J.L."/>
            <person name="Whitfield E.J."/>
            <person name="Bayraktaroglu L."/>
            <person name="Berman B.P."/>
            <person name="Bettencourt B.R."/>
            <person name="Celniker S.E."/>
            <person name="de Grey A.D.N.J."/>
            <person name="Drysdale R.A."/>
            <person name="Harris N.L."/>
            <person name="Richter J."/>
            <person name="Russo S."/>
            <person name="Schroeder A.J."/>
            <person name="Shu S.Q."/>
            <person name="Stapleton M."/>
            <person name="Yamada C."/>
            <person name="Ashburner M."/>
            <person name="Gelbart W.M."/>
            <person name="Rubin G.M."/>
            <person name="Lewis S.E."/>
        </authorList>
    </citation>
    <scope>GENOME REANNOTATION</scope>
    <source>
        <strain evidence="10">Berkeley</strain>
    </source>
</reference>
<reference evidence="7" key="3">
    <citation type="journal article" date="2019" name="Elife">
        <title>Dzip1 and Fam92 form a ciliary transition zone complex with cell type specific roles in Drosophila.</title>
        <authorList>
            <person name="Lapart J.A."/>
            <person name="Gottardo M."/>
            <person name="Cortier E."/>
            <person name="Duteyrat J.L."/>
            <person name="Augiere C."/>
            <person name="Mange A."/>
            <person name="Jerber J."/>
            <person name="Solassol J."/>
            <person name="Gopalakrishnan J."/>
            <person name="Thomas J."/>
            <person name="Durand B."/>
        </authorList>
    </citation>
    <scope>FUNCTION</scope>
    <scope>IDENTIFICATION IN A COMPLEX WITH FAM92 AND CBY</scope>
    <scope>INTERACTION WITH CBY</scope>
    <scope>SUBCELLULAR LOCATION</scope>
    <scope>TISSUE SPECIFICITY</scope>
    <scope>MUTAGENESIS OF 1-MET--GLU-65</scope>
</reference>
<reference evidence="7" key="4">
    <citation type="journal article" date="2020" name="PLoS Biol.">
        <title>CEP290 is essential for the initiation of ciliary transition zone assembly.</title>
        <authorList>
            <person name="Wu Z."/>
            <person name="Pang N."/>
            <person name="Zhang Y."/>
            <person name="Chen H."/>
            <person name="Peng Y."/>
            <person name="Fu J."/>
            <person name="Wei Q."/>
        </authorList>
    </citation>
    <scope>FUNCTION</scope>
    <scope>INTERACTION WITH CBY; CEP290 AND RAB8</scope>
    <scope>SUBCELLULAR LOCATION</scope>
    <scope>MUTAGENESIS OF 357-LEU--LYS-737</scope>
</reference>
<dbReference type="EMBL" id="AE014297">
    <property type="protein sequence ID" value="AAF56305.1"/>
    <property type="molecule type" value="Genomic_DNA"/>
</dbReference>
<dbReference type="EMBL" id="AE014297">
    <property type="protein sequence ID" value="AGB96298.1"/>
    <property type="molecule type" value="Genomic_DNA"/>
</dbReference>
<dbReference type="RefSeq" id="NP_001262918.1">
    <property type="nucleotide sequence ID" value="NM_001275989.1"/>
</dbReference>
<dbReference type="RefSeq" id="NP_651263.1">
    <property type="nucleotide sequence ID" value="NM_143006.2"/>
</dbReference>
<dbReference type="SMR" id="Q9VC70"/>
<dbReference type="FunCoup" id="Q9VC70">
    <property type="interactions" value="32"/>
</dbReference>
<dbReference type="IntAct" id="Q9VC70">
    <property type="interactions" value="8"/>
</dbReference>
<dbReference type="STRING" id="7227.FBpp0084025"/>
<dbReference type="PaxDb" id="7227-FBpp0084025"/>
<dbReference type="EnsemblMetazoa" id="FBtr0084641">
    <property type="protein sequence ID" value="FBpp0084025"/>
    <property type="gene ID" value="FBgn0039201"/>
</dbReference>
<dbReference type="EnsemblMetazoa" id="FBtr0334333">
    <property type="protein sequence ID" value="FBpp0306441"/>
    <property type="gene ID" value="FBgn0039201"/>
</dbReference>
<dbReference type="GeneID" id="42921"/>
<dbReference type="KEGG" id="dme:Dmel_CG13617"/>
<dbReference type="UCSC" id="CG13617-RA">
    <property type="organism name" value="d. melanogaster"/>
</dbReference>
<dbReference type="AGR" id="FB:FBgn0039201"/>
<dbReference type="CTD" id="22873"/>
<dbReference type="FlyBase" id="FBgn0039201">
    <property type="gene designation" value="DZIP1"/>
</dbReference>
<dbReference type="VEuPathDB" id="VectorBase:FBgn0039201"/>
<dbReference type="eggNOG" id="ENOG502QRAI">
    <property type="taxonomic scope" value="Eukaryota"/>
</dbReference>
<dbReference type="HOGENOM" id="CLU_380955_0_0_1"/>
<dbReference type="InParanoid" id="Q9VC70"/>
<dbReference type="OMA" id="LMPHGFD"/>
<dbReference type="OrthoDB" id="515971at2759"/>
<dbReference type="PhylomeDB" id="Q9VC70"/>
<dbReference type="Reactome" id="R-DME-5632684">
    <property type="pathway name" value="Hedgehog 'on' state"/>
</dbReference>
<dbReference type="BioGRID-ORCS" id="42921">
    <property type="hits" value="0 hits in 3 CRISPR screens"/>
</dbReference>
<dbReference type="GenomeRNAi" id="42921"/>
<dbReference type="PRO" id="PR:Q9VC70"/>
<dbReference type="Proteomes" id="UP000000803">
    <property type="component" value="Chromosome 3R"/>
</dbReference>
<dbReference type="Bgee" id="FBgn0039201">
    <property type="expression patterns" value="Expressed in spermatocyte in testis and 9 other cell types or tissues"/>
</dbReference>
<dbReference type="GO" id="GO:0005814">
    <property type="term" value="C:centriole"/>
    <property type="evidence" value="ECO:0007669"/>
    <property type="project" value="UniProtKB-SubCell"/>
</dbReference>
<dbReference type="GO" id="GO:0036064">
    <property type="term" value="C:ciliary basal body"/>
    <property type="evidence" value="ECO:0000314"/>
    <property type="project" value="UniProtKB"/>
</dbReference>
<dbReference type="GO" id="GO:0035869">
    <property type="term" value="C:ciliary transition zone"/>
    <property type="evidence" value="ECO:0000314"/>
    <property type="project" value="UniProtKB"/>
</dbReference>
<dbReference type="GO" id="GO:0005737">
    <property type="term" value="C:cytoplasm"/>
    <property type="evidence" value="ECO:0000318"/>
    <property type="project" value="GO_Central"/>
</dbReference>
<dbReference type="GO" id="GO:0030425">
    <property type="term" value="C:dendrite"/>
    <property type="evidence" value="ECO:0000314"/>
    <property type="project" value="UniProtKB"/>
</dbReference>
<dbReference type="GO" id="GO:0008270">
    <property type="term" value="F:zinc ion binding"/>
    <property type="evidence" value="ECO:0007669"/>
    <property type="project" value="UniProtKB-KW"/>
</dbReference>
<dbReference type="GO" id="GO:0060271">
    <property type="term" value="P:cilium assembly"/>
    <property type="evidence" value="ECO:0000318"/>
    <property type="project" value="GO_Central"/>
</dbReference>
<dbReference type="InterPro" id="IPR032714">
    <property type="entry name" value="DZIP1_N"/>
</dbReference>
<dbReference type="InterPro" id="IPR051241">
    <property type="entry name" value="DZIP_RILPL"/>
</dbReference>
<dbReference type="InterPro" id="IPR013087">
    <property type="entry name" value="Znf_C2H2_type"/>
</dbReference>
<dbReference type="PANTHER" id="PTHR21502:SF3">
    <property type="entry name" value="CILIUM ASSEMBLY PROTEIN DZIP1L"/>
    <property type="match status" value="1"/>
</dbReference>
<dbReference type="PANTHER" id="PTHR21502">
    <property type="entry name" value="ZINC FINGER PROTEIN DZIP1"/>
    <property type="match status" value="1"/>
</dbReference>
<dbReference type="Pfam" id="PF13815">
    <property type="entry name" value="Dzip-like_N"/>
    <property type="match status" value="1"/>
</dbReference>
<dbReference type="PROSITE" id="PS00028">
    <property type="entry name" value="ZINC_FINGER_C2H2_1"/>
    <property type="match status" value="1"/>
</dbReference>
<dbReference type="PROSITE" id="PS50157">
    <property type="entry name" value="ZINC_FINGER_C2H2_2"/>
    <property type="match status" value="1"/>
</dbReference>
<organism evidence="10">
    <name type="scientific">Drosophila melanogaster</name>
    <name type="common">Fruit fly</name>
    <dbReference type="NCBI Taxonomy" id="7227"/>
    <lineage>
        <taxon>Eukaryota</taxon>
        <taxon>Metazoa</taxon>
        <taxon>Ecdysozoa</taxon>
        <taxon>Arthropoda</taxon>
        <taxon>Hexapoda</taxon>
        <taxon>Insecta</taxon>
        <taxon>Pterygota</taxon>
        <taxon>Neoptera</taxon>
        <taxon>Endopterygota</taxon>
        <taxon>Diptera</taxon>
        <taxon>Brachycera</taxon>
        <taxon>Muscomorpha</taxon>
        <taxon>Ephydroidea</taxon>
        <taxon>Drosophilidae</taxon>
        <taxon>Drosophila</taxon>
        <taxon>Sophophora</taxon>
    </lineage>
</organism>